<sequence>MSILNLVRADLLNSQNYVPGGESARYRSHANELPWSPVTMGEYNLNYYPNIGLQIELQKQLAKRYQINSDQIILTRGSDDGIDLTTRLFLTAGKDAFMQFPPTFPMYAFYVRLQQAELIECPLDRRTNFRLTLDQIENSWKPNCKVIMFCSPNNPTGNLVDLNLIAKTCELYTNQSIIVVDEAYIEFANAPSATSLIGEFENLIVLRTLSKAFGLAGLRLGCIIAQSPIIQAFNKIIAPYSIATPSMELAKRALNNSDWFTKTIEQIKSSRAWVIKKFADNPIIEKIYPTETNFILIQTRFSKQLATWLARYGIAVRDFPSSSLLHDHLRITVGHDEQNQLLIDALSSFNADVAGLNYEKDFIY</sequence>
<proteinExistence type="inferred from homology"/>
<organism>
    <name type="scientific">Legionella pneumophila (strain Lens)</name>
    <dbReference type="NCBI Taxonomy" id="297245"/>
    <lineage>
        <taxon>Bacteria</taxon>
        <taxon>Pseudomonadati</taxon>
        <taxon>Pseudomonadota</taxon>
        <taxon>Gammaproteobacteria</taxon>
        <taxon>Legionellales</taxon>
        <taxon>Legionellaceae</taxon>
        <taxon>Legionella</taxon>
    </lineage>
</organism>
<keyword id="KW-0028">Amino-acid biosynthesis</keyword>
<keyword id="KW-0032">Aminotransferase</keyword>
<keyword id="KW-0368">Histidine biosynthesis</keyword>
<keyword id="KW-0663">Pyridoxal phosphate</keyword>
<keyword id="KW-0808">Transferase</keyword>
<name>HIS81_LEGPL</name>
<feature type="chain" id="PRO_0000153377" description="Histidinol-phosphate aminotransferase 1">
    <location>
        <begin position="1"/>
        <end position="364"/>
    </location>
</feature>
<feature type="modified residue" description="N6-(pyridoxal phosphate)lysine" evidence="1">
    <location>
        <position position="211"/>
    </location>
</feature>
<protein>
    <recommendedName>
        <fullName evidence="1">Histidinol-phosphate aminotransferase 1</fullName>
        <ecNumber evidence="1">2.6.1.9</ecNumber>
    </recommendedName>
    <alternativeName>
        <fullName evidence="1">Imidazole acetol-phosphate transaminase 1</fullName>
    </alternativeName>
</protein>
<reference key="1">
    <citation type="journal article" date="2004" name="Nat. Genet.">
        <title>Evidence in the Legionella pneumophila genome for exploitation of host cell functions and high genome plasticity.</title>
        <authorList>
            <person name="Cazalet C."/>
            <person name="Rusniok C."/>
            <person name="Brueggemann H."/>
            <person name="Zidane N."/>
            <person name="Magnier A."/>
            <person name="Ma L."/>
            <person name="Tichit M."/>
            <person name="Jarraud S."/>
            <person name="Bouchier C."/>
            <person name="Vandenesch F."/>
            <person name="Kunst F."/>
            <person name="Etienne J."/>
            <person name="Glaser P."/>
            <person name="Buchrieser C."/>
        </authorList>
    </citation>
    <scope>NUCLEOTIDE SEQUENCE [LARGE SCALE GENOMIC DNA]</scope>
    <source>
        <strain>Lens</strain>
    </source>
</reference>
<gene>
    <name evidence="1" type="primary">hisC1</name>
    <name type="ordered locus">lpl1206</name>
</gene>
<accession>Q5WX92</accession>
<comment type="catalytic activity">
    <reaction evidence="1">
        <text>L-histidinol phosphate + 2-oxoglutarate = 3-(imidazol-4-yl)-2-oxopropyl phosphate + L-glutamate</text>
        <dbReference type="Rhea" id="RHEA:23744"/>
        <dbReference type="ChEBI" id="CHEBI:16810"/>
        <dbReference type="ChEBI" id="CHEBI:29985"/>
        <dbReference type="ChEBI" id="CHEBI:57766"/>
        <dbReference type="ChEBI" id="CHEBI:57980"/>
        <dbReference type="EC" id="2.6.1.9"/>
    </reaction>
</comment>
<comment type="cofactor">
    <cofactor evidence="1">
        <name>pyridoxal 5'-phosphate</name>
        <dbReference type="ChEBI" id="CHEBI:597326"/>
    </cofactor>
</comment>
<comment type="pathway">
    <text evidence="1">Amino-acid biosynthesis; L-histidine biosynthesis; L-histidine from 5-phospho-alpha-D-ribose 1-diphosphate: step 7/9.</text>
</comment>
<comment type="subunit">
    <text evidence="1">Homodimer.</text>
</comment>
<comment type="similarity">
    <text evidence="1">Belongs to the class-II pyridoxal-phosphate-dependent aminotransferase family. Histidinol-phosphate aminotransferase subfamily.</text>
</comment>
<evidence type="ECO:0000255" key="1">
    <source>
        <dbReference type="HAMAP-Rule" id="MF_01023"/>
    </source>
</evidence>
<dbReference type="EC" id="2.6.1.9" evidence="1"/>
<dbReference type="EMBL" id="CR628337">
    <property type="protein sequence ID" value="CAH15445.1"/>
    <property type="molecule type" value="Genomic_DNA"/>
</dbReference>
<dbReference type="RefSeq" id="WP_011215299.1">
    <property type="nucleotide sequence ID" value="NC_006369.1"/>
</dbReference>
<dbReference type="SMR" id="Q5WX92"/>
<dbReference type="KEGG" id="lpf:lpl1206"/>
<dbReference type="LegioList" id="lpl1206"/>
<dbReference type="HOGENOM" id="CLU_017584_3_1_6"/>
<dbReference type="UniPathway" id="UPA00031">
    <property type="reaction ID" value="UER00012"/>
</dbReference>
<dbReference type="Proteomes" id="UP000002517">
    <property type="component" value="Chromosome"/>
</dbReference>
<dbReference type="GO" id="GO:0004400">
    <property type="term" value="F:histidinol-phosphate transaminase activity"/>
    <property type="evidence" value="ECO:0007669"/>
    <property type="project" value="UniProtKB-UniRule"/>
</dbReference>
<dbReference type="GO" id="GO:0030170">
    <property type="term" value="F:pyridoxal phosphate binding"/>
    <property type="evidence" value="ECO:0007669"/>
    <property type="project" value="InterPro"/>
</dbReference>
<dbReference type="GO" id="GO:0000105">
    <property type="term" value="P:L-histidine biosynthetic process"/>
    <property type="evidence" value="ECO:0007669"/>
    <property type="project" value="UniProtKB-UniRule"/>
</dbReference>
<dbReference type="CDD" id="cd00609">
    <property type="entry name" value="AAT_like"/>
    <property type="match status" value="1"/>
</dbReference>
<dbReference type="Gene3D" id="3.90.1150.10">
    <property type="entry name" value="Aspartate Aminotransferase, domain 1"/>
    <property type="match status" value="1"/>
</dbReference>
<dbReference type="Gene3D" id="3.40.640.10">
    <property type="entry name" value="Type I PLP-dependent aspartate aminotransferase-like (Major domain)"/>
    <property type="match status" value="1"/>
</dbReference>
<dbReference type="HAMAP" id="MF_01023">
    <property type="entry name" value="HisC_aminotrans_2"/>
    <property type="match status" value="1"/>
</dbReference>
<dbReference type="InterPro" id="IPR001917">
    <property type="entry name" value="Aminotrans_II_pyridoxalP_BS"/>
</dbReference>
<dbReference type="InterPro" id="IPR004839">
    <property type="entry name" value="Aminotransferase_I/II_large"/>
</dbReference>
<dbReference type="InterPro" id="IPR005861">
    <property type="entry name" value="HisP_aminotrans"/>
</dbReference>
<dbReference type="InterPro" id="IPR015424">
    <property type="entry name" value="PyrdxlP-dep_Trfase"/>
</dbReference>
<dbReference type="InterPro" id="IPR015421">
    <property type="entry name" value="PyrdxlP-dep_Trfase_major"/>
</dbReference>
<dbReference type="InterPro" id="IPR015422">
    <property type="entry name" value="PyrdxlP-dep_Trfase_small"/>
</dbReference>
<dbReference type="NCBIfam" id="TIGR01141">
    <property type="entry name" value="hisC"/>
    <property type="match status" value="1"/>
</dbReference>
<dbReference type="PANTHER" id="PTHR42885:SF2">
    <property type="entry name" value="HISTIDINOL-PHOSPHATE AMINOTRANSFERASE"/>
    <property type="match status" value="1"/>
</dbReference>
<dbReference type="PANTHER" id="PTHR42885">
    <property type="entry name" value="HISTIDINOL-PHOSPHATE AMINOTRANSFERASE-RELATED"/>
    <property type="match status" value="1"/>
</dbReference>
<dbReference type="Pfam" id="PF00155">
    <property type="entry name" value="Aminotran_1_2"/>
    <property type="match status" value="1"/>
</dbReference>
<dbReference type="SUPFAM" id="SSF53383">
    <property type="entry name" value="PLP-dependent transferases"/>
    <property type="match status" value="1"/>
</dbReference>
<dbReference type="PROSITE" id="PS00599">
    <property type="entry name" value="AA_TRANSFER_CLASS_2"/>
    <property type="match status" value="1"/>
</dbReference>